<keyword id="KW-0002">3D-structure</keyword>
<keyword id="KW-0067">ATP-binding</keyword>
<keyword id="KW-0227">DNA damage</keyword>
<keyword id="KW-0234">DNA repair</keyword>
<keyword id="KW-0238">DNA-binding</keyword>
<keyword id="KW-0547">Nucleotide-binding</keyword>
<sequence>MEGMLKGEGPGPLPPLLQQYVELRDQYPDYLLLFQVGDFYECFGEDAERLARALGLVLTHKTSKDFTTPMAGIPLRAFEAYAERLLKMGFRLAVADQVEPAEEAEGLVRREVTQLLTPGTLLQESLLPREANYLAAIATGDGWGLAFLDVSTGEFKGTVLKSKSALYDELFRHRPAEVLLAPELLENGAFLDEFRKRFPVMLSEAPFEPEGEGPLALRRARGALLAYAQRTQGGALSLQPFRFYDPGAFMRLPEATLRALEVFEPLRGQDTLFSVLDETRTAPGRRLLQSWLRHPLLDRGPLEARLDRVEGFVREGALREGVRRLLYRLADLERLATRLELGRASPKDLGALRRSLQILPELRALLGEEVGLPDLSPLKEELEAALVEDPPLKVSEGGLIREGYDPDLDALRAAHREGVAYFLELEERERERTGIPTLKVGYNAVFGYYLEVTRPYYERVPKEYRPVQTLKDRQRYTLPEMKEKEREVYRLEALIRRREEEVFLEVRERAKRQAEALREAARILAELDVYAALAEVAVRYGYVRPRFGDRLQIRAGRHPVVERRTEFVPNDLEMAHELVLITGPNMAGKSTFLRQTALIALLAQVGSFVPAEEAHLPLFDGIYTRIGASDDLAGGKSTFMVEMEEVALILKEATENSLVLLDEVGRGTSSLDGVAIATAVAEALHERRAYTLFATHYFELTALGLPRLKNLHVAAREEAGGLVFYHQVLPGPASKSYGVEVAAMAGLPKEVVARARALLQAMAARREGALDAVLERLLALDPDRLTPLEALRLLQELKALALGAPLDTMKG</sequence>
<protein>
    <recommendedName>
        <fullName>DNA mismatch repair protein MutS</fullName>
    </recommendedName>
</protein>
<proteinExistence type="evidence at protein level"/>
<accession>Q56215</accession>
<evidence type="ECO:0000255" key="1"/>
<evidence type="ECO:0000305" key="2"/>
<evidence type="ECO:0007829" key="3">
    <source>
        <dbReference type="PDB" id="1EWQ"/>
    </source>
</evidence>
<evidence type="ECO:0007829" key="4">
    <source>
        <dbReference type="PDB" id="1FW6"/>
    </source>
</evidence>
<name>MUTS_THEAQ</name>
<gene>
    <name type="primary">mutS</name>
</gene>
<feature type="chain" id="PRO_0000115156" description="DNA mismatch repair protein MutS">
    <location>
        <begin position="1"/>
        <end position="811"/>
    </location>
</feature>
<feature type="binding site" evidence="1">
    <location>
        <begin position="583"/>
        <end position="590"/>
    </location>
    <ligand>
        <name>ATP</name>
        <dbReference type="ChEBI" id="CHEBI:30616"/>
    </ligand>
</feature>
<feature type="helix" evidence="3">
    <location>
        <begin position="15"/>
        <end position="26"/>
    </location>
</feature>
<feature type="strand" evidence="3">
    <location>
        <begin position="30"/>
        <end position="36"/>
    </location>
</feature>
<feature type="strand" evidence="3">
    <location>
        <begin position="39"/>
        <end position="43"/>
    </location>
</feature>
<feature type="helix" evidence="3">
    <location>
        <begin position="44"/>
        <end position="54"/>
    </location>
</feature>
<feature type="strand" evidence="3">
    <location>
        <begin position="59"/>
        <end position="62"/>
    </location>
</feature>
<feature type="strand" evidence="3">
    <location>
        <begin position="67"/>
        <end position="74"/>
    </location>
</feature>
<feature type="helix" evidence="3">
    <location>
        <begin position="75"/>
        <end position="77"/>
    </location>
</feature>
<feature type="helix" evidence="3">
    <location>
        <begin position="78"/>
        <end position="87"/>
    </location>
</feature>
<feature type="strand" evidence="3">
    <location>
        <begin position="92"/>
        <end position="97"/>
    </location>
</feature>
<feature type="helix" evidence="3">
    <location>
        <begin position="101"/>
        <end position="103"/>
    </location>
</feature>
<feature type="strand" evidence="3">
    <location>
        <begin position="105"/>
        <end position="107"/>
    </location>
</feature>
<feature type="strand" evidence="3">
    <location>
        <begin position="110"/>
        <end position="116"/>
    </location>
</feature>
<feature type="helix" evidence="3">
    <location>
        <begin position="118"/>
        <end position="120"/>
    </location>
</feature>
<feature type="helix" evidence="3">
    <location>
        <begin position="124"/>
        <end position="126"/>
    </location>
</feature>
<feature type="strand" evidence="3">
    <location>
        <begin position="134"/>
        <end position="148"/>
    </location>
</feature>
<feature type="turn" evidence="3">
    <location>
        <begin position="150"/>
        <end position="152"/>
    </location>
</feature>
<feature type="strand" evidence="3">
    <location>
        <begin position="155"/>
        <end position="162"/>
    </location>
</feature>
<feature type="helix" evidence="3">
    <location>
        <begin position="163"/>
        <end position="173"/>
    </location>
</feature>
<feature type="strand" evidence="3">
    <location>
        <begin position="176"/>
        <end position="180"/>
    </location>
</feature>
<feature type="helix" evidence="3">
    <location>
        <begin position="182"/>
        <end position="186"/>
    </location>
</feature>
<feature type="helix" evidence="3">
    <location>
        <begin position="188"/>
        <end position="197"/>
    </location>
</feature>
<feature type="strand" evidence="3">
    <location>
        <begin position="200"/>
        <end position="203"/>
    </location>
</feature>
<feature type="strand" evidence="3">
    <location>
        <begin position="211"/>
        <end position="213"/>
    </location>
</feature>
<feature type="helix" evidence="3">
    <location>
        <begin position="215"/>
        <end position="232"/>
    </location>
</feature>
<feature type="helix" evidence="3">
    <location>
        <begin position="246"/>
        <end position="248"/>
    </location>
</feature>
<feature type="helix" evidence="3">
    <location>
        <begin position="254"/>
        <end position="259"/>
    </location>
</feature>
<feature type="strand" evidence="3">
    <location>
        <begin position="262"/>
        <end position="264"/>
    </location>
</feature>
<feature type="strand" evidence="3">
    <location>
        <begin position="266"/>
        <end position="268"/>
    </location>
</feature>
<feature type="helix" evidence="3">
    <location>
        <begin position="272"/>
        <end position="276"/>
    </location>
</feature>
<feature type="helix" evidence="3">
    <location>
        <begin position="282"/>
        <end position="293"/>
    </location>
</feature>
<feature type="helix" evidence="3">
    <location>
        <begin position="299"/>
        <end position="314"/>
    </location>
</feature>
<feature type="helix" evidence="3">
    <location>
        <begin position="316"/>
        <end position="326"/>
    </location>
</feature>
<feature type="helix" evidence="3">
    <location>
        <begin position="332"/>
        <end position="340"/>
    </location>
</feature>
<feature type="helix" evidence="3">
    <location>
        <begin position="346"/>
        <end position="366"/>
    </location>
</feature>
<feature type="helix" evidence="4">
    <location>
        <begin position="368"/>
        <end position="370"/>
    </location>
</feature>
<feature type="helix" evidence="3">
    <location>
        <begin position="376"/>
        <end position="385"/>
    </location>
</feature>
<feature type="strand" evidence="4">
    <location>
        <begin position="392"/>
        <end position="397"/>
    </location>
</feature>
<feature type="helix" evidence="3">
    <location>
        <begin position="406"/>
        <end position="433"/>
    </location>
</feature>
<feature type="strand" evidence="3">
    <location>
        <begin position="439"/>
        <end position="443"/>
    </location>
</feature>
<feature type="turn" evidence="3">
    <location>
        <begin position="444"/>
        <end position="446"/>
    </location>
</feature>
<feature type="strand" evidence="3">
    <location>
        <begin position="447"/>
        <end position="453"/>
    </location>
</feature>
<feature type="helix" evidence="3">
    <location>
        <begin position="454"/>
        <end position="459"/>
    </location>
</feature>
<feature type="strand" evidence="3">
    <location>
        <begin position="465"/>
        <end position="469"/>
    </location>
</feature>
<feature type="strand" evidence="3">
    <location>
        <begin position="471"/>
        <end position="477"/>
    </location>
</feature>
<feature type="helix" evidence="3">
    <location>
        <begin position="479"/>
        <end position="511"/>
    </location>
</feature>
<feature type="helix" evidence="3">
    <location>
        <begin position="514"/>
        <end position="540"/>
    </location>
</feature>
<feature type="strand" evidence="3">
    <location>
        <begin position="546"/>
        <end position="556"/>
    </location>
</feature>
<feature type="helix" evidence="3">
    <location>
        <begin position="561"/>
        <end position="563"/>
    </location>
</feature>
<feature type="strand" evidence="3">
    <location>
        <begin position="570"/>
        <end position="576"/>
    </location>
</feature>
<feature type="strand" evidence="3">
    <location>
        <begin position="578"/>
        <end position="583"/>
    </location>
</feature>
<feature type="strand" evidence="3">
    <location>
        <begin position="585"/>
        <end position="588"/>
    </location>
</feature>
<feature type="helix" evidence="3">
    <location>
        <begin position="589"/>
        <end position="603"/>
    </location>
</feature>
<feature type="turn" evidence="3">
    <location>
        <begin position="604"/>
        <end position="606"/>
    </location>
</feature>
<feature type="strand" evidence="3">
    <location>
        <begin position="609"/>
        <end position="616"/>
    </location>
</feature>
<feature type="strand" evidence="3">
    <location>
        <begin position="620"/>
        <end position="625"/>
    </location>
</feature>
<feature type="helix" evidence="3">
    <location>
        <begin position="638"/>
        <end position="652"/>
    </location>
</feature>
<feature type="strand" evidence="3">
    <location>
        <begin position="657"/>
        <end position="663"/>
    </location>
</feature>
<feature type="turn" evidence="3">
    <location>
        <begin position="664"/>
        <end position="667"/>
    </location>
</feature>
<feature type="helix" evidence="3">
    <location>
        <begin position="670"/>
        <end position="687"/>
    </location>
</feature>
<feature type="strand" evidence="3">
    <location>
        <begin position="690"/>
        <end position="694"/>
    </location>
</feature>
<feature type="helix" evidence="3">
    <location>
        <begin position="698"/>
        <end position="701"/>
    </location>
</feature>
<feature type="strand" evidence="3">
    <location>
        <begin position="708"/>
        <end position="716"/>
    </location>
</feature>
<feature type="strand" evidence="3">
    <location>
        <begin position="719"/>
        <end position="721"/>
    </location>
</feature>
<feature type="strand" evidence="3">
    <location>
        <begin position="723"/>
        <end position="731"/>
    </location>
</feature>
<feature type="helix" evidence="3">
    <location>
        <begin position="738"/>
        <end position="744"/>
    </location>
</feature>
<feature type="helix" evidence="3">
    <location>
        <begin position="749"/>
        <end position="762"/>
    </location>
</feature>
<organism>
    <name type="scientific">Thermus aquaticus</name>
    <dbReference type="NCBI Taxonomy" id="271"/>
    <lineage>
        <taxon>Bacteria</taxon>
        <taxon>Thermotogati</taxon>
        <taxon>Deinococcota</taxon>
        <taxon>Deinococci</taxon>
        <taxon>Thermales</taxon>
        <taxon>Thermaceae</taxon>
        <taxon>Thermus</taxon>
    </lineage>
</organism>
<dbReference type="EMBL" id="U33117">
    <property type="protein sequence ID" value="AAC43637.1"/>
    <property type="molecule type" value="Genomic_DNA"/>
</dbReference>
<dbReference type="RefSeq" id="WP_053767724.1">
    <property type="nucleotide sequence ID" value="NZ_LHCI01000106.1"/>
</dbReference>
<dbReference type="PDB" id="1EWQ">
    <property type="method" value="X-ray"/>
    <property type="resolution" value="2.20 A"/>
    <property type="chains" value="A/B=1-765"/>
</dbReference>
<dbReference type="PDB" id="1EWR">
    <property type="method" value="X-ray"/>
    <property type="resolution" value="3.19 A"/>
    <property type="chains" value="A/B=117-765"/>
</dbReference>
<dbReference type="PDB" id="1FW6">
    <property type="method" value="X-ray"/>
    <property type="resolution" value="2.70 A"/>
    <property type="chains" value="A/B=1-768"/>
</dbReference>
<dbReference type="PDB" id="1NNE">
    <property type="method" value="X-ray"/>
    <property type="resolution" value="3.11 A"/>
    <property type="chains" value="A/B=1-765"/>
</dbReference>
<dbReference type="PDBsum" id="1EWQ"/>
<dbReference type="PDBsum" id="1EWR"/>
<dbReference type="PDBsum" id="1FW6"/>
<dbReference type="PDBsum" id="1NNE"/>
<dbReference type="SMR" id="Q56215"/>
<dbReference type="EvolutionaryTrace" id="Q56215"/>
<dbReference type="GO" id="GO:0005524">
    <property type="term" value="F:ATP binding"/>
    <property type="evidence" value="ECO:0007669"/>
    <property type="project" value="UniProtKB-UniRule"/>
</dbReference>
<dbReference type="GO" id="GO:0140664">
    <property type="term" value="F:ATP-dependent DNA damage sensor activity"/>
    <property type="evidence" value="ECO:0007669"/>
    <property type="project" value="InterPro"/>
</dbReference>
<dbReference type="GO" id="GO:0003684">
    <property type="term" value="F:damaged DNA binding"/>
    <property type="evidence" value="ECO:0007669"/>
    <property type="project" value="UniProtKB-UniRule"/>
</dbReference>
<dbReference type="GO" id="GO:0030983">
    <property type="term" value="F:mismatched DNA binding"/>
    <property type="evidence" value="ECO:0007669"/>
    <property type="project" value="InterPro"/>
</dbReference>
<dbReference type="GO" id="GO:0006298">
    <property type="term" value="P:mismatch repair"/>
    <property type="evidence" value="ECO:0007669"/>
    <property type="project" value="UniProtKB-UniRule"/>
</dbReference>
<dbReference type="CDD" id="cd03284">
    <property type="entry name" value="ABC_MutS1"/>
    <property type="match status" value="1"/>
</dbReference>
<dbReference type="FunFam" id="1.10.1420.10:FF:000001">
    <property type="entry name" value="DNA mismatch repair protein MutS"/>
    <property type="match status" value="1"/>
</dbReference>
<dbReference type="FunFam" id="3.40.50.300:FF:000870">
    <property type="entry name" value="MutS protein homolog 4"/>
    <property type="match status" value="1"/>
</dbReference>
<dbReference type="Gene3D" id="1.10.1420.10">
    <property type="match status" value="2"/>
</dbReference>
<dbReference type="Gene3D" id="3.40.1170.10">
    <property type="entry name" value="DNA repair protein MutS, domain I"/>
    <property type="match status" value="1"/>
</dbReference>
<dbReference type="Gene3D" id="3.30.420.110">
    <property type="entry name" value="MutS, connector domain"/>
    <property type="match status" value="1"/>
</dbReference>
<dbReference type="Gene3D" id="3.40.50.300">
    <property type="entry name" value="P-loop containing nucleotide triphosphate hydrolases"/>
    <property type="match status" value="1"/>
</dbReference>
<dbReference type="HAMAP" id="MF_00096">
    <property type="entry name" value="MutS"/>
    <property type="match status" value="1"/>
</dbReference>
<dbReference type="InterPro" id="IPR005748">
    <property type="entry name" value="DNA_mismatch_repair_MutS"/>
</dbReference>
<dbReference type="InterPro" id="IPR007695">
    <property type="entry name" value="DNA_mismatch_repair_MutS-lik_N"/>
</dbReference>
<dbReference type="InterPro" id="IPR017261">
    <property type="entry name" value="DNA_mismatch_repair_MutS/MSH"/>
</dbReference>
<dbReference type="InterPro" id="IPR000432">
    <property type="entry name" value="DNA_mismatch_repair_MutS_C"/>
</dbReference>
<dbReference type="InterPro" id="IPR007861">
    <property type="entry name" value="DNA_mismatch_repair_MutS_clamp"/>
</dbReference>
<dbReference type="InterPro" id="IPR007696">
    <property type="entry name" value="DNA_mismatch_repair_MutS_core"/>
</dbReference>
<dbReference type="InterPro" id="IPR016151">
    <property type="entry name" value="DNA_mismatch_repair_MutS_N"/>
</dbReference>
<dbReference type="InterPro" id="IPR036187">
    <property type="entry name" value="DNA_mismatch_repair_MutS_sf"/>
</dbReference>
<dbReference type="InterPro" id="IPR007860">
    <property type="entry name" value="DNA_mmatch_repair_MutS_con_dom"/>
</dbReference>
<dbReference type="InterPro" id="IPR045076">
    <property type="entry name" value="MutS"/>
</dbReference>
<dbReference type="InterPro" id="IPR036678">
    <property type="entry name" value="MutS_con_dom_sf"/>
</dbReference>
<dbReference type="InterPro" id="IPR027417">
    <property type="entry name" value="P-loop_NTPase"/>
</dbReference>
<dbReference type="NCBIfam" id="TIGR01070">
    <property type="entry name" value="mutS1"/>
    <property type="match status" value="1"/>
</dbReference>
<dbReference type="NCBIfam" id="NF003810">
    <property type="entry name" value="PRK05399.1"/>
    <property type="match status" value="1"/>
</dbReference>
<dbReference type="PANTHER" id="PTHR11361:SF34">
    <property type="entry name" value="DNA MISMATCH REPAIR PROTEIN MSH1, MITOCHONDRIAL"/>
    <property type="match status" value="1"/>
</dbReference>
<dbReference type="PANTHER" id="PTHR11361">
    <property type="entry name" value="DNA MISMATCH REPAIR PROTEIN MUTS FAMILY MEMBER"/>
    <property type="match status" value="1"/>
</dbReference>
<dbReference type="Pfam" id="PF01624">
    <property type="entry name" value="MutS_I"/>
    <property type="match status" value="1"/>
</dbReference>
<dbReference type="Pfam" id="PF05188">
    <property type="entry name" value="MutS_II"/>
    <property type="match status" value="1"/>
</dbReference>
<dbReference type="Pfam" id="PF05192">
    <property type="entry name" value="MutS_III"/>
    <property type="match status" value="1"/>
</dbReference>
<dbReference type="Pfam" id="PF05190">
    <property type="entry name" value="MutS_IV"/>
    <property type="match status" value="1"/>
</dbReference>
<dbReference type="Pfam" id="PF00488">
    <property type="entry name" value="MutS_V"/>
    <property type="match status" value="1"/>
</dbReference>
<dbReference type="PIRSF" id="PIRSF037677">
    <property type="entry name" value="DNA_mis_repair_Msh6"/>
    <property type="match status" value="1"/>
</dbReference>
<dbReference type="SMART" id="SM00534">
    <property type="entry name" value="MUTSac"/>
    <property type="match status" value="1"/>
</dbReference>
<dbReference type="SMART" id="SM00533">
    <property type="entry name" value="MUTSd"/>
    <property type="match status" value="1"/>
</dbReference>
<dbReference type="SUPFAM" id="SSF55271">
    <property type="entry name" value="DNA repair protein MutS, domain I"/>
    <property type="match status" value="1"/>
</dbReference>
<dbReference type="SUPFAM" id="SSF53150">
    <property type="entry name" value="DNA repair protein MutS, domain II"/>
    <property type="match status" value="1"/>
</dbReference>
<dbReference type="SUPFAM" id="SSF48334">
    <property type="entry name" value="DNA repair protein MutS, domain III"/>
    <property type="match status" value="1"/>
</dbReference>
<dbReference type="SUPFAM" id="SSF52540">
    <property type="entry name" value="P-loop containing nucleoside triphosphate hydrolases"/>
    <property type="match status" value="1"/>
</dbReference>
<dbReference type="PROSITE" id="PS00486">
    <property type="entry name" value="DNA_MISMATCH_REPAIR_2"/>
    <property type="match status" value="1"/>
</dbReference>
<reference key="1">
    <citation type="journal article" date="1996" name="J. Biol. Chem.">
        <title>Identification and characterization of a thermostable MutS homolog from Thermus aquaticus.</title>
        <authorList>
            <person name="Biswas I."/>
            <person name="Hsieh P."/>
        </authorList>
    </citation>
    <scope>NUCLEOTIDE SEQUENCE [GENOMIC DNA]</scope>
    <source>
        <strain>ATCC 25104 / DSM 625 / JCM 10724 / NBRC 103206 / NCIMB 11243 / YT-1</strain>
    </source>
</reference>
<comment type="function">
    <text>This protein is involved in the repair of mismatches in DNA. It is possible that it carries out the mismatch recognition step. This protein has a weak ATPase activity.</text>
</comment>
<comment type="similarity">
    <text evidence="2">Belongs to the DNA mismatch repair MutS family.</text>
</comment>